<accession>Q09710</accession>
<feature type="chain" id="PRO_0000116386" description="Uncharacterized protein C18B11.03c">
    <location>
        <begin position="1"/>
        <end position="447"/>
    </location>
</feature>
<feature type="transmembrane region" description="Helical" evidence="1">
    <location>
        <begin position="28"/>
        <end position="48"/>
    </location>
</feature>
<feature type="transmembrane region" description="Helical" evidence="1">
    <location>
        <begin position="241"/>
        <end position="261"/>
    </location>
</feature>
<feature type="transmembrane region" description="Helical" evidence="1">
    <location>
        <begin position="397"/>
        <end position="417"/>
    </location>
</feature>
<reference key="1">
    <citation type="journal article" date="2002" name="Nature">
        <title>The genome sequence of Schizosaccharomyces pombe.</title>
        <authorList>
            <person name="Wood V."/>
            <person name="Gwilliam R."/>
            <person name="Rajandream M.A."/>
            <person name="Lyne M.H."/>
            <person name="Lyne R."/>
            <person name="Stewart A."/>
            <person name="Sgouros J.G."/>
            <person name="Peat N."/>
            <person name="Hayles J."/>
            <person name="Baker S.G."/>
            <person name="Basham D."/>
            <person name="Bowman S."/>
            <person name="Brooks K."/>
            <person name="Brown D."/>
            <person name="Brown S."/>
            <person name="Chillingworth T."/>
            <person name="Churcher C.M."/>
            <person name="Collins M."/>
            <person name="Connor R."/>
            <person name="Cronin A."/>
            <person name="Davis P."/>
            <person name="Feltwell T."/>
            <person name="Fraser A."/>
            <person name="Gentles S."/>
            <person name="Goble A."/>
            <person name="Hamlin N."/>
            <person name="Harris D.E."/>
            <person name="Hidalgo J."/>
            <person name="Hodgson G."/>
            <person name="Holroyd S."/>
            <person name="Hornsby T."/>
            <person name="Howarth S."/>
            <person name="Huckle E.J."/>
            <person name="Hunt S."/>
            <person name="Jagels K."/>
            <person name="James K.D."/>
            <person name="Jones L."/>
            <person name="Jones M."/>
            <person name="Leather S."/>
            <person name="McDonald S."/>
            <person name="McLean J."/>
            <person name="Mooney P."/>
            <person name="Moule S."/>
            <person name="Mungall K.L."/>
            <person name="Murphy L.D."/>
            <person name="Niblett D."/>
            <person name="Odell C."/>
            <person name="Oliver K."/>
            <person name="O'Neil S."/>
            <person name="Pearson D."/>
            <person name="Quail M.A."/>
            <person name="Rabbinowitsch E."/>
            <person name="Rutherford K.M."/>
            <person name="Rutter S."/>
            <person name="Saunders D."/>
            <person name="Seeger K."/>
            <person name="Sharp S."/>
            <person name="Skelton J."/>
            <person name="Simmonds M.N."/>
            <person name="Squares R."/>
            <person name="Squares S."/>
            <person name="Stevens K."/>
            <person name="Taylor K."/>
            <person name="Taylor R.G."/>
            <person name="Tivey A."/>
            <person name="Walsh S.V."/>
            <person name="Warren T."/>
            <person name="Whitehead S."/>
            <person name="Woodward J.R."/>
            <person name="Volckaert G."/>
            <person name="Aert R."/>
            <person name="Robben J."/>
            <person name="Grymonprez B."/>
            <person name="Weltjens I."/>
            <person name="Vanstreels E."/>
            <person name="Rieger M."/>
            <person name="Schaefer M."/>
            <person name="Mueller-Auer S."/>
            <person name="Gabel C."/>
            <person name="Fuchs M."/>
            <person name="Duesterhoeft A."/>
            <person name="Fritzc C."/>
            <person name="Holzer E."/>
            <person name="Moestl D."/>
            <person name="Hilbert H."/>
            <person name="Borzym K."/>
            <person name="Langer I."/>
            <person name="Beck A."/>
            <person name="Lehrach H."/>
            <person name="Reinhardt R."/>
            <person name="Pohl T.M."/>
            <person name="Eger P."/>
            <person name="Zimmermann W."/>
            <person name="Wedler H."/>
            <person name="Wambutt R."/>
            <person name="Purnelle B."/>
            <person name="Goffeau A."/>
            <person name="Cadieu E."/>
            <person name="Dreano S."/>
            <person name="Gloux S."/>
            <person name="Lelaure V."/>
            <person name="Mottier S."/>
            <person name="Galibert F."/>
            <person name="Aves S.J."/>
            <person name="Xiang Z."/>
            <person name="Hunt C."/>
            <person name="Moore K."/>
            <person name="Hurst S.M."/>
            <person name="Lucas M."/>
            <person name="Rochet M."/>
            <person name="Gaillardin C."/>
            <person name="Tallada V.A."/>
            <person name="Garzon A."/>
            <person name="Thode G."/>
            <person name="Daga R.R."/>
            <person name="Cruzado L."/>
            <person name="Jimenez J."/>
            <person name="Sanchez M."/>
            <person name="del Rey F."/>
            <person name="Benito J."/>
            <person name="Dominguez A."/>
            <person name="Revuelta J.L."/>
            <person name="Moreno S."/>
            <person name="Armstrong J."/>
            <person name="Forsburg S.L."/>
            <person name="Cerutti L."/>
            <person name="Lowe T."/>
            <person name="McCombie W.R."/>
            <person name="Paulsen I."/>
            <person name="Potashkin J."/>
            <person name="Shpakovski G.V."/>
            <person name="Ussery D."/>
            <person name="Barrell B.G."/>
            <person name="Nurse P."/>
        </authorList>
    </citation>
    <scope>NUCLEOTIDE SEQUENCE [LARGE SCALE GENOMIC DNA]</scope>
    <source>
        <strain>972 / ATCC 24843</strain>
    </source>
</reference>
<reference key="2">
    <citation type="journal article" date="2011" name="Science">
        <title>Comparative functional genomics of the fission yeasts.</title>
        <authorList>
            <person name="Rhind N."/>
            <person name="Chen Z."/>
            <person name="Yassour M."/>
            <person name="Thompson D.A."/>
            <person name="Haas B.J."/>
            <person name="Habib N."/>
            <person name="Wapinski I."/>
            <person name="Roy S."/>
            <person name="Lin M.F."/>
            <person name="Heiman D.I."/>
            <person name="Young S.K."/>
            <person name="Furuya K."/>
            <person name="Guo Y."/>
            <person name="Pidoux A."/>
            <person name="Chen H.M."/>
            <person name="Robbertse B."/>
            <person name="Goldberg J.M."/>
            <person name="Aoki K."/>
            <person name="Bayne E.H."/>
            <person name="Berlin A.M."/>
            <person name="Desjardins C.A."/>
            <person name="Dobbs E."/>
            <person name="Dukaj L."/>
            <person name="Fan L."/>
            <person name="FitzGerald M.G."/>
            <person name="French C."/>
            <person name="Gujja S."/>
            <person name="Hansen K."/>
            <person name="Keifenheim D."/>
            <person name="Levin J.Z."/>
            <person name="Mosher R.A."/>
            <person name="Mueller C.A."/>
            <person name="Pfiffner J."/>
            <person name="Priest M."/>
            <person name="Russ C."/>
            <person name="Smialowska A."/>
            <person name="Swoboda P."/>
            <person name="Sykes S.M."/>
            <person name="Vaughn M."/>
            <person name="Vengrova S."/>
            <person name="Yoder R."/>
            <person name="Zeng Q."/>
            <person name="Allshire R."/>
            <person name="Baulcombe D."/>
            <person name="Birren B.W."/>
            <person name="Brown W."/>
            <person name="Ekwall K."/>
            <person name="Kellis M."/>
            <person name="Leatherwood J."/>
            <person name="Levin H."/>
            <person name="Margalit H."/>
            <person name="Martienssen R."/>
            <person name="Nieduszynski C.A."/>
            <person name="Spatafora J.W."/>
            <person name="Friedman N."/>
            <person name="Dalgaard J.Z."/>
            <person name="Baumann P."/>
            <person name="Niki H."/>
            <person name="Regev A."/>
            <person name="Nusbaum C."/>
        </authorList>
    </citation>
    <scope>REVISION OF GENE MODEL</scope>
</reference>
<evidence type="ECO:0000255" key="1"/>
<evidence type="ECO:0000305" key="2"/>
<gene>
    <name type="ORF">SPAC18B11.03c</name>
</gene>
<protein>
    <recommendedName>
        <fullName>Uncharacterized protein C18B11.03c</fullName>
    </recommendedName>
</protein>
<sequence>MDTYMEEREAGRLEIYSVKRNVLNMFSIVIVSATYSISLDSTVLYPAVYHAIVNQPMLGARIHNCHSKIPIVKKLKTIDLDKVVKYADDQKVDSFCNNALQNFKLCYDDETLPLWMVYVLNDKSELVFIYDHSLFDGGSGPLFHKYVLEGLQMSKTNFSSSTVPVSELPLPKNLEKLIDVHPSWFCLMKALWTNSGLPFSKGFRSPSYKGHAPVRPFSSHTIFFSISNAVVKNIKQLSKNIDASFTSIFYSVFMLSIYYAIAKNGKVNLDMLIDVNARRFLPVAKQTMGNYVFSYVHHLNGFQPSQRQEDYKHTMVDLATEFSHRLKAALSNPREMSQQIGLLSYIDIEDYLLKSCEKTRGNTAEISNLGYFSFPADSSVKIKNMAFAQPCSSLSAPFVLNVITVADGPCSFSLSIFDDGNTEQTHELAIKIRDKFLSILEKVSMNS</sequence>
<organism>
    <name type="scientific">Schizosaccharomyces pombe (strain 972 / ATCC 24843)</name>
    <name type="common">Fission yeast</name>
    <dbReference type="NCBI Taxonomy" id="284812"/>
    <lineage>
        <taxon>Eukaryota</taxon>
        <taxon>Fungi</taxon>
        <taxon>Dikarya</taxon>
        <taxon>Ascomycota</taxon>
        <taxon>Taphrinomycotina</taxon>
        <taxon>Schizosaccharomycetes</taxon>
        <taxon>Schizosaccharomycetales</taxon>
        <taxon>Schizosaccharomycetaceae</taxon>
        <taxon>Schizosaccharomyces</taxon>
    </lineage>
</organism>
<keyword id="KW-0472">Membrane</keyword>
<keyword id="KW-1185">Reference proteome</keyword>
<keyword id="KW-0812">Transmembrane</keyword>
<keyword id="KW-1133">Transmembrane helix</keyword>
<name>YA33_SCHPO</name>
<dbReference type="EMBL" id="CU329670">
    <property type="protein sequence ID" value="CAA90588.2"/>
    <property type="molecule type" value="Genomic_DNA"/>
</dbReference>
<dbReference type="PIR" id="T37911">
    <property type="entry name" value="S58302"/>
</dbReference>
<dbReference type="RefSeq" id="NP_592880.2">
    <property type="nucleotide sequence ID" value="NM_001018280.2"/>
</dbReference>
<dbReference type="SMR" id="Q09710"/>
<dbReference type="BioGRID" id="279067">
    <property type="interactions" value="25"/>
</dbReference>
<dbReference type="FunCoup" id="Q09710">
    <property type="interactions" value="2"/>
</dbReference>
<dbReference type="STRING" id="284812.Q09710"/>
<dbReference type="iPTMnet" id="Q09710"/>
<dbReference type="PaxDb" id="4896-SPAC18B11.03c.1"/>
<dbReference type="EnsemblFungi" id="SPAC18B11.03c.1">
    <property type="protein sequence ID" value="SPAC18B11.03c.1:pep"/>
    <property type="gene ID" value="SPAC18B11.03c"/>
</dbReference>
<dbReference type="KEGG" id="spo:2542613"/>
<dbReference type="PomBase" id="SPAC18B11.03c"/>
<dbReference type="VEuPathDB" id="FungiDB:SPAC18B11.03c"/>
<dbReference type="eggNOG" id="ENOG502RF5P">
    <property type="taxonomic scope" value="Eukaryota"/>
</dbReference>
<dbReference type="HOGENOM" id="CLU_618484_0_0_1"/>
<dbReference type="InParanoid" id="Q09710"/>
<dbReference type="OMA" id="LEDQHNT"/>
<dbReference type="PRO" id="PR:Q09710"/>
<dbReference type="Proteomes" id="UP000002485">
    <property type="component" value="Chromosome I"/>
</dbReference>
<dbReference type="GO" id="GO:0032153">
    <property type="term" value="C:cell division site"/>
    <property type="evidence" value="ECO:0007005"/>
    <property type="project" value="PomBase"/>
</dbReference>
<dbReference type="GO" id="GO:0005829">
    <property type="term" value="C:cytosol"/>
    <property type="evidence" value="ECO:0007005"/>
    <property type="project" value="PomBase"/>
</dbReference>
<dbReference type="GO" id="GO:0005783">
    <property type="term" value="C:endoplasmic reticulum"/>
    <property type="evidence" value="ECO:0000266"/>
    <property type="project" value="PomBase"/>
</dbReference>
<dbReference type="GO" id="GO:0140622">
    <property type="term" value="C:ER-to-endosome phospholipid transfer complex"/>
    <property type="evidence" value="ECO:0000266"/>
    <property type="project" value="PomBase"/>
</dbReference>
<dbReference type="GO" id="GO:0005811">
    <property type="term" value="C:lipid droplet"/>
    <property type="evidence" value="ECO:0000266"/>
    <property type="project" value="PomBase"/>
</dbReference>
<dbReference type="GO" id="GO:0005635">
    <property type="term" value="C:nuclear envelope"/>
    <property type="evidence" value="ECO:0000266"/>
    <property type="project" value="PomBase"/>
</dbReference>
<dbReference type="GO" id="GO:0004026">
    <property type="term" value="F:alcohol O-acetyltransferase activity"/>
    <property type="evidence" value="ECO:0000266"/>
    <property type="project" value="PomBase"/>
</dbReference>
<dbReference type="GO" id="GO:0008080">
    <property type="term" value="F:N-acetyltransferase activity"/>
    <property type="evidence" value="ECO:0000318"/>
    <property type="project" value="GO_Central"/>
</dbReference>
<dbReference type="GO" id="GO:0140343">
    <property type="term" value="F:phosphatidylserine transfer activity"/>
    <property type="evidence" value="ECO:0000266"/>
    <property type="project" value="PomBase"/>
</dbReference>
<dbReference type="GO" id="GO:0120010">
    <property type="term" value="P:intermembrane phospholipid transfer"/>
    <property type="evidence" value="ECO:0000305"/>
    <property type="project" value="PomBase"/>
</dbReference>
<dbReference type="InterPro" id="IPR052058">
    <property type="entry name" value="Alcohol_O-acetyltransferase"/>
</dbReference>
<dbReference type="InterPro" id="IPR010828">
    <property type="entry name" value="Atf2/Sli1-like"/>
</dbReference>
<dbReference type="PANTHER" id="PTHR28037">
    <property type="entry name" value="ALCOHOL O-ACETYLTRANSFERASE 1-RELATED"/>
    <property type="match status" value="1"/>
</dbReference>
<dbReference type="PANTHER" id="PTHR28037:SF1">
    <property type="entry name" value="ALCOHOL O-ACETYLTRANSFERASE 1-RELATED"/>
    <property type="match status" value="1"/>
</dbReference>
<dbReference type="Pfam" id="PF07247">
    <property type="entry name" value="AATase"/>
    <property type="match status" value="1"/>
</dbReference>
<comment type="subcellular location">
    <subcellularLocation>
        <location evidence="2">Membrane</location>
        <topology evidence="2">Multi-pass membrane protein</topology>
    </subcellularLocation>
</comment>
<proteinExistence type="predicted"/>